<dbReference type="EMBL" id="AF185636">
    <property type="protein sequence ID" value="AAG17010.1"/>
    <property type="molecule type" value="Genomic_DNA"/>
</dbReference>
<dbReference type="SMR" id="Q9F9K6"/>
<dbReference type="GO" id="GO:1990904">
    <property type="term" value="C:ribonucleoprotein complex"/>
    <property type="evidence" value="ECO:0007669"/>
    <property type="project" value="UniProtKB-KW"/>
</dbReference>
<dbReference type="GO" id="GO:0005840">
    <property type="term" value="C:ribosome"/>
    <property type="evidence" value="ECO:0007669"/>
    <property type="project" value="UniProtKB-KW"/>
</dbReference>
<dbReference type="GO" id="GO:0019843">
    <property type="term" value="F:rRNA binding"/>
    <property type="evidence" value="ECO:0007669"/>
    <property type="project" value="UniProtKB-UniRule"/>
</dbReference>
<dbReference type="GO" id="GO:0003735">
    <property type="term" value="F:structural constituent of ribosome"/>
    <property type="evidence" value="ECO:0007669"/>
    <property type="project" value="InterPro"/>
</dbReference>
<dbReference type="GO" id="GO:0006412">
    <property type="term" value="P:translation"/>
    <property type="evidence" value="ECO:0007669"/>
    <property type="project" value="UniProtKB-UniRule"/>
</dbReference>
<dbReference type="Gene3D" id="3.10.430.100">
    <property type="entry name" value="Ribosomal protein L9, C-terminal domain"/>
    <property type="match status" value="1"/>
</dbReference>
<dbReference type="Gene3D" id="3.40.5.10">
    <property type="entry name" value="Ribosomal protein L9, N-terminal domain"/>
    <property type="match status" value="1"/>
</dbReference>
<dbReference type="HAMAP" id="MF_00503">
    <property type="entry name" value="Ribosomal_bL9"/>
    <property type="match status" value="1"/>
</dbReference>
<dbReference type="InterPro" id="IPR000244">
    <property type="entry name" value="Ribosomal_bL9"/>
</dbReference>
<dbReference type="InterPro" id="IPR009027">
    <property type="entry name" value="Ribosomal_bL9/RNase_H1_N"/>
</dbReference>
<dbReference type="InterPro" id="IPR020594">
    <property type="entry name" value="Ribosomal_bL9_bac/chp"/>
</dbReference>
<dbReference type="InterPro" id="IPR020069">
    <property type="entry name" value="Ribosomal_bL9_C"/>
</dbReference>
<dbReference type="InterPro" id="IPR036791">
    <property type="entry name" value="Ribosomal_bL9_C_sf"/>
</dbReference>
<dbReference type="InterPro" id="IPR020070">
    <property type="entry name" value="Ribosomal_bL9_N"/>
</dbReference>
<dbReference type="InterPro" id="IPR036935">
    <property type="entry name" value="Ribosomal_bL9_N_sf"/>
</dbReference>
<dbReference type="NCBIfam" id="TIGR00158">
    <property type="entry name" value="L9"/>
    <property type="match status" value="1"/>
</dbReference>
<dbReference type="PANTHER" id="PTHR21368">
    <property type="entry name" value="50S RIBOSOMAL PROTEIN L9"/>
    <property type="match status" value="1"/>
</dbReference>
<dbReference type="Pfam" id="PF03948">
    <property type="entry name" value="Ribosomal_L9_C"/>
    <property type="match status" value="1"/>
</dbReference>
<dbReference type="Pfam" id="PF01281">
    <property type="entry name" value="Ribosomal_L9_N"/>
    <property type="match status" value="1"/>
</dbReference>
<dbReference type="SUPFAM" id="SSF55658">
    <property type="entry name" value="L9 N-domain-like"/>
    <property type="match status" value="1"/>
</dbReference>
<dbReference type="SUPFAM" id="SSF55653">
    <property type="entry name" value="Ribosomal protein L9 C-domain"/>
    <property type="match status" value="1"/>
</dbReference>
<dbReference type="PROSITE" id="PS00651">
    <property type="entry name" value="RIBOSOMAL_L9"/>
    <property type="match status" value="1"/>
</dbReference>
<evidence type="ECO:0000250" key="1"/>
<evidence type="ECO:0000256" key="2">
    <source>
        <dbReference type="SAM" id="MobiDB-lite"/>
    </source>
</evidence>
<evidence type="ECO:0000305" key="3"/>
<protein>
    <recommendedName>
        <fullName evidence="3">Large ribosomal subunit protein bL9</fullName>
    </recommendedName>
    <alternativeName>
        <fullName>50S ribosomal protein L9</fullName>
    </alternativeName>
    <alternativeName>
        <fullName>Cultivar-specific nodulation protein 1</fullName>
    </alternativeName>
</protein>
<name>RL9_RHILT</name>
<reference key="1">
    <citation type="submission" date="1999-09" db="EMBL/GenBank/DDBJ databases">
        <title>Two new chromosomal loci influence cultivar specific nodulation failure in interactions between strain ANU794 and subterranean clover.</title>
        <authorList>
            <person name="Roddam L.F."/>
            <person name="Lewis-Henderson W."/>
            <person name="Djordjevic M."/>
        </authorList>
    </citation>
    <scope>NUCLEOTIDE SEQUENCE [GENOMIC DNA]</scope>
    <source>
        <strain>ANU 794</strain>
    </source>
</reference>
<feature type="chain" id="PRO_0000176666" description="Large ribosomal subunit protein bL9">
    <location>
        <begin position="1"/>
        <end position="192"/>
    </location>
</feature>
<feature type="region of interest" description="Disordered" evidence="2">
    <location>
        <begin position="173"/>
        <end position="192"/>
    </location>
</feature>
<feature type="compositionally biased region" description="Acidic residues" evidence="2">
    <location>
        <begin position="179"/>
        <end position="192"/>
    </location>
</feature>
<proteinExistence type="inferred from homology"/>
<accession>Q9F9K6</accession>
<gene>
    <name type="primary">rplI</name>
    <name type="synonym">csn1</name>
</gene>
<sequence length="192" mass="21096">MEVILLERISKLGQMGETVKVRDGFARNYLLPLGKALRANAANKTRFEAERATLEARNLERKSEAQKVADVLDGKSFIVVRSAGETGQLYGSVAARDVVEILGAEGFNIGRNQVHLNTPIKSIGLHKVELQLHAEVEIHVELNVARSAEEAERQAKGEELTSVDAIYGVDEDALRPEDFFDPEADGVDEDEA</sequence>
<organism>
    <name type="scientific">Rhizobium leguminosarum bv. trifolii</name>
    <dbReference type="NCBI Taxonomy" id="386"/>
    <lineage>
        <taxon>Bacteria</taxon>
        <taxon>Pseudomonadati</taxon>
        <taxon>Pseudomonadota</taxon>
        <taxon>Alphaproteobacteria</taxon>
        <taxon>Hyphomicrobiales</taxon>
        <taxon>Rhizobiaceae</taxon>
        <taxon>Rhizobium/Agrobacterium group</taxon>
        <taxon>Rhizobium</taxon>
    </lineage>
</organism>
<keyword id="KW-0687">Ribonucleoprotein</keyword>
<keyword id="KW-0689">Ribosomal protein</keyword>
<keyword id="KW-0694">RNA-binding</keyword>
<keyword id="KW-0699">rRNA-binding</keyword>
<comment type="function">
    <text evidence="1">Binds to the 23S rRNA.</text>
</comment>
<comment type="similarity">
    <text evidence="3">Belongs to the bacterial ribosomal protein bL9 family.</text>
</comment>